<organism>
    <name type="scientific">Rhodococcus opacus (strain B4)</name>
    <dbReference type="NCBI Taxonomy" id="632772"/>
    <lineage>
        <taxon>Bacteria</taxon>
        <taxon>Bacillati</taxon>
        <taxon>Actinomycetota</taxon>
        <taxon>Actinomycetes</taxon>
        <taxon>Mycobacteriales</taxon>
        <taxon>Nocardiaceae</taxon>
        <taxon>Rhodococcus</taxon>
    </lineage>
</organism>
<proteinExistence type="inferred from homology"/>
<sequence>MSASTETHHASEAAVPTAPRPRPALGSKSGRLHQVPHIAGLILGVFSVLVFLWSISPVLRYYVHVPREYIDTYYFDAPDTSLSWALVVALLAAALASRKRIAWWLLTIYLVLILITNVIVSITDRNVNAMVAAVVQVVLIGILVAARPEFYTRVRRGAGWKALGVLIVGLAIGTLVGWGLVELFPGTLPQGERFLWALNRVTALAAADNEQFSGRPHGFVNTLLGLFGAMALLAAVITLFRAQRSHNALTGNDESALRGLLLQYGADDSLGYFATRRDKAVVFAPSGKAAITYRVELGVCLASGDPIGDPEAWPHAIEAWQTLASQYGWATAVMGASETGATAYNKAGLTVLQLGDEAILRTREFNLSGRDMRQVRQAVTRVRRQGVTVRIRRHRDVPPEEMAEAIRLADAWRDTETERGFSMALGRLGDRLDGDCLLVEAIAEDGEIDGILSLVPWGPTGVSLDLMRRKPTSPNGVVELMVSELATTSDQFGITKVSLNFAVFRSVFEEGSRIGAGPILRIWRSILVFFSRWWQLEALYRSNVKYQPEWVPRFLCFDDNRELLRVGFASAVAEGFVTLPRFGRSGTHDAIEHTGHHAAVPAALVAAEGLHSDGSAPGEGLAPTATGPKRPEQVRVRLDKLTGLAEQGIDPYPVAYPPSHTVTEAVESPEGTTVRIAGRLLRIRDYGGVVFAVVRDWSGDIQVLVDEARVGTDRIRAFAAEFDLGDLVEVAGVIGYSRRGALSLLANEWRMTGKCLHPLPDKWKGLSDPETRVRQRYVDLAINTDARRLLEARSAVVKSLRDSLGGRGFLEVETPILQQVHGGANAAPFLTHINAYNLDLYLRIAPELYLKRLCVAGMEKVFEIGRVFRNEGVDFKHNPEFTILEAYEAHSDYEKMMVLCRELIQTAAVAAYGREIIMRPGPDGTLVEVDISGEWPVKTMHQAVAEKLGVDVSPETPLAELQRLCDEHEIPYQSTWDAGAVAQEMYEHLVEDYTEFPTFYTNFPTSMSPLTRPHPTIPGVAAKWDLVAWGVELGTAYSELTDPVDQRNRLTEQSMLAAGGDEEAMELDEDFLQALEHAMPPTGGLGMGVDRVVMLITGGSIRETLAFPLAKPRQ</sequence>
<keyword id="KW-0030">Aminoacyl-tRNA synthetase</keyword>
<keyword id="KW-0046">Antibiotic resistance</keyword>
<keyword id="KW-0067">ATP-binding</keyword>
<keyword id="KW-1003">Cell membrane</keyword>
<keyword id="KW-0238">DNA-binding</keyword>
<keyword id="KW-0436">Ligase</keyword>
<keyword id="KW-0443">Lipid metabolism</keyword>
<keyword id="KW-0460">Magnesium</keyword>
<keyword id="KW-0472">Membrane</keyword>
<keyword id="KW-0479">Metal-binding</keyword>
<keyword id="KW-0511">Multifunctional enzyme</keyword>
<keyword id="KW-0547">Nucleotide-binding</keyword>
<keyword id="KW-0808">Transferase</keyword>
<keyword id="KW-0812">Transmembrane</keyword>
<keyword id="KW-1133">Transmembrane helix</keyword>
<feature type="chain" id="PRO_0000394335" description="Lysylphosphatidylglycerol biosynthesis bifunctional protein LysX">
    <location>
        <begin position="1"/>
        <end position="1114"/>
    </location>
</feature>
<feature type="transmembrane region" description="Helical" evidence="2">
    <location>
        <begin position="38"/>
        <end position="58"/>
    </location>
</feature>
<feature type="transmembrane region" description="Helical" evidence="2">
    <location>
        <begin position="77"/>
        <end position="97"/>
    </location>
</feature>
<feature type="transmembrane region" description="Helical" evidence="2">
    <location>
        <begin position="101"/>
        <end position="121"/>
    </location>
</feature>
<feature type="transmembrane region" description="Helical" evidence="2">
    <location>
        <begin position="126"/>
        <end position="146"/>
    </location>
</feature>
<feature type="transmembrane region" description="Helical" evidence="2">
    <location>
        <begin position="164"/>
        <end position="184"/>
    </location>
</feature>
<feature type="transmembrane region" description="Helical" evidence="2">
    <location>
        <begin position="219"/>
        <end position="239"/>
    </location>
</feature>
<feature type="DNA-binding region" description="OB">
    <location>
        <begin position="674"/>
        <end position="751"/>
    </location>
</feature>
<feature type="region of interest" description="Phosphatidylglycerol lysyltransferase">
    <location>
        <begin position="1"/>
        <end position="618"/>
    </location>
</feature>
<feature type="region of interest" description="Disordered" evidence="3">
    <location>
        <begin position="1"/>
        <end position="28"/>
    </location>
</feature>
<feature type="region of interest" description="Lysine--tRNA ligase">
    <location>
        <begin position="619"/>
        <end position="1114"/>
    </location>
</feature>
<feature type="compositionally biased region" description="Basic and acidic residues" evidence="3">
    <location>
        <begin position="1"/>
        <end position="11"/>
    </location>
</feature>
<feature type="binding site" evidence="1">
    <location>
        <position position="1025"/>
    </location>
    <ligand>
        <name>Mg(2+)</name>
        <dbReference type="ChEBI" id="CHEBI:18420"/>
        <label>1</label>
    </ligand>
</feature>
<feature type="binding site" evidence="1">
    <location>
        <position position="1032"/>
    </location>
    <ligand>
        <name>Mg(2+)</name>
        <dbReference type="ChEBI" id="CHEBI:18420"/>
        <label>1</label>
    </ligand>
</feature>
<feature type="binding site" evidence="1">
    <location>
        <position position="1032"/>
    </location>
    <ligand>
        <name>Mg(2+)</name>
        <dbReference type="ChEBI" id="CHEBI:18420"/>
        <label>2</label>
    </ligand>
</feature>
<reference key="1">
    <citation type="submission" date="2009-03" db="EMBL/GenBank/DDBJ databases">
        <title>Comparison of the complete genome sequences of Rhodococcus erythropolis PR4 and Rhodococcus opacus B4.</title>
        <authorList>
            <person name="Takarada H."/>
            <person name="Sekine M."/>
            <person name="Hosoyama A."/>
            <person name="Yamada R."/>
            <person name="Fujisawa T."/>
            <person name="Omata S."/>
            <person name="Shimizu A."/>
            <person name="Tsukatani N."/>
            <person name="Tanikawa S."/>
            <person name="Fujita N."/>
            <person name="Harayama S."/>
        </authorList>
    </citation>
    <scope>NUCLEOTIDE SEQUENCE [LARGE SCALE GENOMIC DNA]</scope>
    <source>
        <strain>B4</strain>
    </source>
</reference>
<name>LYSX_RHOOB</name>
<accession>C1B7Z5</accession>
<evidence type="ECO:0000250" key="1"/>
<evidence type="ECO:0000255" key="2"/>
<evidence type="ECO:0000256" key="3">
    <source>
        <dbReference type="SAM" id="MobiDB-lite"/>
    </source>
</evidence>
<evidence type="ECO:0000305" key="4"/>
<gene>
    <name type="primary">lysX</name>
    <name type="ordered locus">ROP_35510</name>
</gene>
<dbReference type="EC" id="6.1.1.6"/>
<dbReference type="EC" id="2.3.2.3"/>
<dbReference type="EMBL" id="AP011115">
    <property type="protein sequence ID" value="BAH51798.1"/>
    <property type="molecule type" value="Genomic_DNA"/>
</dbReference>
<dbReference type="RefSeq" id="WP_012690737.1">
    <property type="nucleotide sequence ID" value="NC_012522.1"/>
</dbReference>
<dbReference type="SMR" id="C1B7Z5"/>
<dbReference type="STRING" id="632772.ROP_35510"/>
<dbReference type="KEGG" id="rop:ROP_35510"/>
<dbReference type="PATRIC" id="fig|632772.20.peg.3720"/>
<dbReference type="HOGENOM" id="CLU_008255_2_0_11"/>
<dbReference type="OrthoDB" id="9801152at2"/>
<dbReference type="Proteomes" id="UP000002212">
    <property type="component" value="Chromosome"/>
</dbReference>
<dbReference type="GO" id="GO:0005829">
    <property type="term" value="C:cytosol"/>
    <property type="evidence" value="ECO:0007669"/>
    <property type="project" value="TreeGrafter"/>
</dbReference>
<dbReference type="GO" id="GO:0005886">
    <property type="term" value="C:plasma membrane"/>
    <property type="evidence" value="ECO:0007669"/>
    <property type="project" value="UniProtKB-SubCell"/>
</dbReference>
<dbReference type="GO" id="GO:0005524">
    <property type="term" value="F:ATP binding"/>
    <property type="evidence" value="ECO:0007669"/>
    <property type="project" value="UniProtKB-UniRule"/>
</dbReference>
<dbReference type="GO" id="GO:0003677">
    <property type="term" value="F:DNA binding"/>
    <property type="evidence" value="ECO:0007669"/>
    <property type="project" value="UniProtKB-KW"/>
</dbReference>
<dbReference type="GO" id="GO:0004824">
    <property type="term" value="F:lysine-tRNA ligase activity"/>
    <property type="evidence" value="ECO:0007669"/>
    <property type="project" value="UniProtKB-UniRule"/>
</dbReference>
<dbReference type="GO" id="GO:0000287">
    <property type="term" value="F:magnesium ion binding"/>
    <property type="evidence" value="ECO:0007669"/>
    <property type="project" value="UniProtKB-UniRule"/>
</dbReference>
<dbReference type="GO" id="GO:0050071">
    <property type="term" value="F:phosphatidylglycerol lysyltransferase activity"/>
    <property type="evidence" value="ECO:0007669"/>
    <property type="project" value="UniProtKB-EC"/>
</dbReference>
<dbReference type="GO" id="GO:0000049">
    <property type="term" value="F:tRNA binding"/>
    <property type="evidence" value="ECO:0007669"/>
    <property type="project" value="TreeGrafter"/>
</dbReference>
<dbReference type="GO" id="GO:0006629">
    <property type="term" value="P:lipid metabolic process"/>
    <property type="evidence" value="ECO:0007669"/>
    <property type="project" value="UniProtKB-KW"/>
</dbReference>
<dbReference type="GO" id="GO:0006430">
    <property type="term" value="P:lysyl-tRNA aminoacylation"/>
    <property type="evidence" value="ECO:0007669"/>
    <property type="project" value="UniProtKB-UniRule"/>
</dbReference>
<dbReference type="GO" id="GO:0046677">
    <property type="term" value="P:response to antibiotic"/>
    <property type="evidence" value="ECO:0007669"/>
    <property type="project" value="UniProtKB-KW"/>
</dbReference>
<dbReference type="CDD" id="cd04322">
    <property type="entry name" value="LysRS_N"/>
    <property type="match status" value="1"/>
</dbReference>
<dbReference type="Gene3D" id="3.30.930.10">
    <property type="entry name" value="Bira Bifunctional Protein, Domain 2"/>
    <property type="match status" value="1"/>
</dbReference>
<dbReference type="Gene3D" id="2.40.50.140">
    <property type="entry name" value="Nucleic acid-binding proteins"/>
    <property type="match status" value="1"/>
</dbReference>
<dbReference type="HAMAP" id="MF_00252">
    <property type="entry name" value="Lys_tRNA_synth_class2"/>
    <property type="match status" value="1"/>
</dbReference>
<dbReference type="InterPro" id="IPR004364">
    <property type="entry name" value="Aa-tRNA-synt_II"/>
</dbReference>
<dbReference type="InterPro" id="IPR006195">
    <property type="entry name" value="aa-tRNA-synth_II"/>
</dbReference>
<dbReference type="InterPro" id="IPR045864">
    <property type="entry name" value="aa-tRNA-synth_II/BPL/LPL"/>
</dbReference>
<dbReference type="InterPro" id="IPR024320">
    <property type="entry name" value="LPG_synthase_C"/>
</dbReference>
<dbReference type="InterPro" id="IPR002313">
    <property type="entry name" value="Lys-tRNA-ligase_II"/>
</dbReference>
<dbReference type="InterPro" id="IPR044136">
    <property type="entry name" value="Lys-tRNA-ligase_II_N"/>
</dbReference>
<dbReference type="InterPro" id="IPR018149">
    <property type="entry name" value="Lys-tRNA-synth_II_C"/>
</dbReference>
<dbReference type="InterPro" id="IPR012340">
    <property type="entry name" value="NA-bd_OB-fold"/>
</dbReference>
<dbReference type="InterPro" id="IPR004365">
    <property type="entry name" value="NA-bd_OB_tRNA"/>
</dbReference>
<dbReference type="InterPro" id="IPR031553">
    <property type="entry name" value="tRNA-synt_2_TM"/>
</dbReference>
<dbReference type="NCBIfam" id="TIGR00499">
    <property type="entry name" value="lysS_bact"/>
    <property type="match status" value="1"/>
</dbReference>
<dbReference type="NCBIfam" id="NF001756">
    <property type="entry name" value="PRK00484.1"/>
    <property type="match status" value="1"/>
</dbReference>
<dbReference type="NCBIfam" id="NF002821">
    <property type="entry name" value="PRK02983.1"/>
    <property type="match status" value="1"/>
</dbReference>
<dbReference type="PANTHER" id="PTHR42918:SF15">
    <property type="entry name" value="LYSINE--TRNA LIGASE, CHLOROPLASTIC_MITOCHONDRIAL"/>
    <property type="match status" value="1"/>
</dbReference>
<dbReference type="PANTHER" id="PTHR42918">
    <property type="entry name" value="LYSYL-TRNA SYNTHETASE"/>
    <property type="match status" value="1"/>
</dbReference>
<dbReference type="Pfam" id="PF09924">
    <property type="entry name" value="LPG_synthase_C"/>
    <property type="match status" value="1"/>
</dbReference>
<dbReference type="Pfam" id="PF00152">
    <property type="entry name" value="tRNA-synt_2"/>
    <property type="match status" value="1"/>
</dbReference>
<dbReference type="Pfam" id="PF16995">
    <property type="entry name" value="tRNA-synt_2_TM"/>
    <property type="match status" value="1"/>
</dbReference>
<dbReference type="Pfam" id="PF01336">
    <property type="entry name" value="tRNA_anti-codon"/>
    <property type="match status" value="1"/>
</dbReference>
<dbReference type="PRINTS" id="PR00982">
    <property type="entry name" value="TRNASYNTHLYS"/>
</dbReference>
<dbReference type="SUPFAM" id="SSF55681">
    <property type="entry name" value="Class II aaRS and biotin synthetases"/>
    <property type="match status" value="1"/>
</dbReference>
<dbReference type="SUPFAM" id="SSF50249">
    <property type="entry name" value="Nucleic acid-binding proteins"/>
    <property type="match status" value="1"/>
</dbReference>
<dbReference type="PROSITE" id="PS50862">
    <property type="entry name" value="AA_TRNA_LIGASE_II"/>
    <property type="match status" value="1"/>
</dbReference>
<protein>
    <recommendedName>
        <fullName>Lysylphosphatidylglycerol biosynthesis bifunctional protein LysX</fullName>
    </recommendedName>
    <domain>
        <recommendedName>
            <fullName>Lysine--tRNA ligase</fullName>
            <ecNumber>6.1.1.6</ecNumber>
        </recommendedName>
        <alternativeName>
            <fullName>Lysyl-tRNA synthetase</fullName>
            <shortName>LysRS</shortName>
        </alternativeName>
    </domain>
    <domain>
        <recommendedName>
            <fullName>Phosphatidylglycerol lysyltransferase</fullName>
            <ecNumber>2.3.2.3</ecNumber>
        </recommendedName>
        <alternativeName>
            <fullName>Lysylphosphatidylglycerol synthetase</fullName>
            <shortName>LPG synthetase</shortName>
        </alternativeName>
    </domain>
</protein>
<comment type="function">
    <text evidence="1">Catalyzes the production of L-lysyl-tRNA(Lys)transfer and the transfer of a lysyl group from L-lysyl-tRNA(Lys) to membrane-bound phosphatidylglycerol (PG), which produces lysylphosphatidylglycerol (LPG), one of the components of the bacterial membrane with a positive net charge. LPG synthesis contributes to the resistance to cationic antimicrobial peptides (CAMPs) and likely protects M.tuberculosis against the CAMPs produced by competiting microorganisms (bacteriocins). In fact, the modification of anionic phosphatidylglycerol with positively charged L-lysine results in repulsion of the peptides (By similarity).</text>
</comment>
<comment type="catalytic activity">
    <reaction>
        <text>tRNA(Lys) + L-lysine + ATP = L-lysyl-tRNA(Lys) + AMP + diphosphate</text>
        <dbReference type="Rhea" id="RHEA:20792"/>
        <dbReference type="Rhea" id="RHEA-COMP:9696"/>
        <dbReference type="Rhea" id="RHEA-COMP:9697"/>
        <dbReference type="ChEBI" id="CHEBI:30616"/>
        <dbReference type="ChEBI" id="CHEBI:32551"/>
        <dbReference type="ChEBI" id="CHEBI:33019"/>
        <dbReference type="ChEBI" id="CHEBI:78442"/>
        <dbReference type="ChEBI" id="CHEBI:78529"/>
        <dbReference type="ChEBI" id="CHEBI:456215"/>
        <dbReference type="EC" id="6.1.1.6"/>
    </reaction>
</comment>
<comment type="catalytic activity">
    <reaction>
        <text>L-lysyl-tRNA(Lys) + a 1,2-diacyl-sn-glycero-3-phospho-(1'-sn-glycerol) = a 1,2-diacyl-sn-glycero-3-phospho-1'-(3'-O-L-lysyl)-sn-glycerol + tRNA(Lys)</text>
        <dbReference type="Rhea" id="RHEA:10668"/>
        <dbReference type="Rhea" id="RHEA-COMP:9696"/>
        <dbReference type="Rhea" id="RHEA-COMP:9697"/>
        <dbReference type="ChEBI" id="CHEBI:64716"/>
        <dbReference type="ChEBI" id="CHEBI:75792"/>
        <dbReference type="ChEBI" id="CHEBI:78442"/>
        <dbReference type="ChEBI" id="CHEBI:78529"/>
        <dbReference type="EC" id="2.3.2.3"/>
    </reaction>
</comment>
<comment type="cofactor">
    <cofactor evidence="1">
        <name>Mg(2+)</name>
        <dbReference type="ChEBI" id="CHEBI:18420"/>
    </cofactor>
    <text evidence="1">Binds 3 Mg(2+) ions per subunit.</text>
</comment>
<comment type="subcellular location">
    <subcellularLocation>
        <location evidence="4">Cell membrane</location>
        <topology evidence="4">Multi-pass membrane protein</topology>
    </subcellularLocation>
</comment>
<comment type="similarity">
    <text evidence="4">In the N-terminal section; belongs to the LPG synthetase family.</text>
</comment>
<comment type="similarity">
    <text evidence="4">In the C-terminal section; belongs to the class-II aminoacyl-tRNA synthetase family.</text>
</comment>